<organism>
    <name type="scientific">Macaca fascicularis</name>
    <name type="common">Crab-eating macaque</name>
    <name type="synonym">Cynomolgus monkey</name>
    <dbReference type="NCBI Taxonomy" id="9541"/>
    <lineage>
        <taxon>Eukaryota</taxon>
        <taxon>Metazoa</taxon>
        <taxon>Chordata</taxon>
        <taxon>Craniata</taxon>
        <taxon>Vertebrata</taxon>
        <taxon>Euteleostomi</taxon>
        <taxon>Mammalia</taxon>
        <taxon>Eutheria</taxon>
        <taxon>Euarchontoglires</taxon>
        <taxon>Primates</taxon>
        <taxon>Haplorrhini</taxon>
        <taxon>Catarrhini</taxon>
        <taxon>Cercopithecidae</taxon>
        <taxon>Cercopithecinae</taxon>
        <taxon>Macaca</taxon>
    </lineage>
</organism>
<proteinExistence type="evidence at transcript level"/>
<reference key="1">
    <citation type="journal article" date="2002" name="BMC Genomics">
        <title>Cynomolgus monkey testicular cDNAs for discovery of novel human genes in the human genome sequence.</title>
        <authorList>
            <person name="Osada N."/>
            <person name="Hida M."/>
            <person name="Kusuda J."/>
            <person name="Tanuma R."/>
            <person name="Hirata M."/>
            <person name="Suto Y."/>
            <person name="Hirai M."/>
            <person name="Terao K."/>
            <person name="Sugano S."/>
            <person name="Hashimoto K."/>
        </authorList>
    </citation>
    <scope>NUCLEOTIDE SEQUENCE [LARGE SCALE MRNA]</scope>
    <source>
        <tissue>Testis</tissue>
    </source>
</reference>
<dbReference type="EMBL" id="AB070173">
    <property type="protein sequence ID" value="BAB63118.1"/>
    <property type="molecule type" value="mRNA"/>
</dbReference>
<dbReference type="RefSeq" id="NP_001306278.1">
    <property type="nucleotide sequence ID" value="NM_001319349.1"/>
</dbReference>
<dbReference type="SMR" id="Q95JK8"/>
<dbReference type="STRING" id="9541.ENSMFAP00000010330"/>
<dbReference type="eggNOG" id="KOG0676">
    <property type="taxonomic scope" value="Eukaryota"/>
</dbReference>
<dbReference type="Proteomes" id="UP000233100">
    <property type="component" value="Unplaced"/>
</dbReference>
<dbReference type="GO" id="GO:0005737">
    <property type="term" value="C:cytoplasm"/>
    <property type="evidence" value="ECO:0007669"/>
    <property type="project" value="UniProtKB-KW"/>
</dbReference>
<dbReference type="GO" id="GO:0005856">
    <property type="term" value="C:cytoskeleton"/>
    <property type="evidence" value="ECO:0007669"/>
    <property type="project" value="UniProtKB-SubCell"/>
</dbReference>
<dbReference type="CDD" id="cd10214">
    <property type="entry name" value="ASKHA_NBD_ACTL7"/>
    <property type="match status" value="1"/>
</dbReference>
<dbReference type="FunFam" id="3.90.640.10:FF:000007">
    <property type="entry name" value="Actin like 7B"/>
    <property type="match status" value="1"/>
</dbReference>
<dbReference type="FunFam" id="3.30.420.40:FF:000050">
    <property type="entry name" value="Actin, alpha skeletal muscle"/>
    <property type="match status" value="1"/>
</dbReference>
<dbReference type="Gene3D" id="3.30.420.40">
    <property type="match status" value="2"/>
</dbReference>
<dbReference type="Gene3D" id="3.90.640.10">
    <property type="entry name" value="Actin, Chain A, domain 4"/>
    <property type="match status" value="1"/>
</dbReference>
<dbReference type="InterPro" id="IPR004000">
    <property type="entry name" value="Actin"/>
</dbReference>
<dbReference type="InterPro" id="IPR043129">
    <property type="entry name" value="ATPase_NBD"/>
</dbReference>
<dbReference type="PANTHER" id="PTHR11937">
    <property type="entry name" value="ACTIN"/>
    <property type="match status" value="1"/>
</dbReference>
<dbReference type="Pfam" id="PF00022">
    <property type="entry name" value="Actin"/>
    <property type="match status" value="1"/>
</dbReference>
<dbReference type="PRINTS" id="PR00190">
    <property type="entry name" value="ACTIN"/>
</dbReference>
<dbReference type="SMART" id="SM00268">
    <property type="entry name" value="ACTIN"/>
    <property type="match status" value="1"/>
</dbReference>
<dbReference type="SUPFAM" id="SSF53067">
    <property type="entry name" value="Actin-like ATPase domain"/>
    <property type="match status" value="2"/>
</dbReference>
<accession>Q95JK8</accession>
<keyword id="KW-0963">Cytoplasm</keyword>
<keyword id="KW-0206">Cytoskeleton</keyword>
<keyword id="KW-0597">Phosphoprotein</keyword>
<keyword id="KW-1185">Reference proteome</keyword>
<comment type="subcellular location">
    <subcellularLocation>
        <location evidence="1">Cytoplasm</location>
        <location evidence="1">Cytoskeleton</location>
    </subcellularLocation>
</comment>
<comment type="similarity">
    <text evidence="4">Belongs to the actin family.</text>
</comment>
<feature type="chain" id="PRO_0000089140" description="Actin-like protein 7B">
    <location>
        <begin position="1"/>
        <end position="415"/>
    </location>
</feature>
<feature type="region of interest" description="Disordered" evidence="3">
    <location>
        <begin position="1"/>
        <end position="35"/>
    </location>
</feature>
<feature type="modified residue" description="Phosphoserine" evidence="2">
    <location>
        <position position="6"/>
    </location>
</feature>
<sequence>MATRNSPMALGTAQGDPGEAGTRPGSDAGLRDTGAATQLKMKPRKVRKIKAVVIDLGSQYCKCGYAGEPRPTYFISSTVGKRCPEAADAGDTRKGTLVGHELLNTETPLKLVNPLKHGIVVDWDCVQDIWEYIFRTAMKILPEEHAVLVSDPPLSPSSNREKYAELMFGTFGIPAMHVTSQSLLSIYSYGKTSGLVVESGHGVSHVVPISEGDVLPGLTSRADYAGGDLTNYLMQLLNEAGHAFTDDHLHIIEHIKKKCCYAAFLPEEELGLVPEELRVDYELPDGKLITIGQERFRCSEMLFQPSLAGSTQPGLPELTAACLGRCQDTGFKEEMAANVLLCGGCTMLDGFPERFQRELSLLCPGDSPAVAAAPERKTSVWTGGSILASLQAFQQLWVSKEEFQERGSMAIYSKC</sequence>
<evidence type="ECO:0000250" key="1"/>
<evidence type="ECO:0000250" key="2">
    <source>
        <dbReference type="UniProtKB" id="Q4QR76"/>
    </source>
</evidence>
<evidence type="ECO:0000256" key="3">
    <source>
        <dbReference type="SAM" id="MobiDB-lite"/>
    </source>
</evidence>
<evidence type="ECO:0000305" key="4"/>
<name>ACL7B_MACFA</name>
<gene>
    <name type="primary">ACTL7B</name>
    <name type="ORF">QtsA-16118</name>
</gene>
<protein>
    <recommendedName>
        <fullName>Actin-like protein 7B</fullName>
    </recommendedName>
    <alternativeName>
        <fullName>Actin-like-7-beta</fullName>
    </alternativeName>
</protein>